<name>CKP2L_BOVIN</name>
<keyword id="KW-0963">Cytoplasm</keyword>
<keyword id="KW-0206">Cytoskeleton</keyword>
<keyword id="KW-1017">Isopeptide bond</keyword>
<keyword id="KW-0597">Phosphoprotein</keyword>
<keyword id="KW-1185">Reference proteome</keyword>
<keyword id="KW-0832">Ubl conjugation</keyword>
<protein>
    <recommendedName>
        <fullName>Cytoskeleton-associated protein 2-like</fullName>
    </recommendedName>
    <alternativeName>
        <fullName>Radial fiber and mitotic spindle protein</fullName>
        <shortName>Radmis</shortName>
    </alternativeName>
</protein>
<evidence type="ECO:0000250" key="1"/>
<evidence type="ECO:0000250" key="2">
    <source>
        <dbReference type="UniProtKB" id="Q8IYA6"/>
    </source>
</evidence>
<evidence type="ECO:0000256" key="3">
    <source>
        <dbReference type="SAM" id="MobiDB-lite"/>
    </source>
</evidence>
<evidence type="ECO:0000305" key="4"/>
<reference key="1">
    <citation type="submission" date="2007-06" db="EMBL/GenBank/DDBJ databases">
        <authorList>
            <consortium name="NIH - Mammalian Gene Collection (MGC) project"/>
        </authorList>
    </citation>
    <scope>NUCLEOTIDE SEQUENCE [LARGE SCALE MRNA]</scope>
    <source>
        <strain>Hereford</strain>
        <tissue>Thymus</tissue>
    </source>
</reference>
<reference key="2">
    <citation type="journal article" date="2005" name="BMC Genomics">
        <title>Characterization of 954 bovine full-CDS cDNA sequences.</title>
        <authorList>
            <person name="Harhay G.P."/>
            <person name="Sonstegard T.S."/>
            <person name="Keele J.W."/>
            <person name="Heaton M.P."/>
            <person name="Clawson M.L."/>
            <person name="Snelling W.M."/>
            <person name="Wiedmann R.T."/>
            <person name="Van Tassell C.P."/>
            <person name="Smith T.P.L."/>
        </authorList>
    </citation>
    <scope>NUCLEOTIDE SEQUENCE [LARGE SCALE MRNA] OF 196-744</scope>
</reference>
<accession>A5PK21</accession>
<accession>Q0V8I3</accession>
<sequence>MVRPGLSAAAEERQRKLQEYLAAKGKLKCQNTKPYLKAKNNCPNPPHSKSTIGPKKDVTNHVALPVKTTRSINIKLQSRPANITRSQRPKLEPPKLGKRLTSESVSSNPNGKPPGNSQQLRGFGSSTDGKQPRKTMGSLNVQKLKTTKQQVTDQRTAKGTDPVDNTHVENESLGGCLKEMNKENLPQDLPNSERKPNPESWTINKPQTNQTKSSLASTREVLDKSSVNSAALKEGVIKPFVEETQISVPPGKSQKLSRVADLIRPGGKPPKTLPSHFVQTLNRTQATKKTVVKDIKSIKVNRSKYERPNEAKLQSYTVTEQKVKHSKPSTHPSVLQGGCNHRHPNIKQDHKPTQACCRPQTSYALQKSKAISQRPNLTVGSFNSVIPSTPSIRANGATGNKCNNSCQQRARTLDSKFKSAPPQKCFLNKTAPRTQAGGPTISGRGVPNGAQTNPCKKIAAEDRRKQLEEWRKSKGKIYKRPPMELKTKRKIIEEMNISFWKSMEKEEEEKKAQLELSNKINNTLTECLQLIERGVLSNEVFAILSSIPEAEKFAKFWICKAKLLASKGTFDVIGLYEEAIRNGATPIQELREVVLNILQDRNRTTEGMTSNSLVAETNITSIEELAKKTESGASCLSPKESEQMSVTPQITKSEQDGHPGIKLQIAPIPRINGMPEVQDMKLITPVRRSARIERAVSRYPEMLQEHDLVVASLNELLEVEETECFIFRKNEALPVTLGFPVSES</sequence>
<comment type="function">
    <text evidence="1">Microtubule-associated protein required for mitotic spindle formation and cell-cycle progression in neural progenitor cells.</text>
</comment>
<comment type="subcellular location">
    <subcellularLocation>
        <location evidence="1">Cytoplasm</location>
        <location evidence="1">Cytoskeleton</location>
        <location evidence="1">Spindle pole</location>
    </subcellularLocation>
    <text evidence="1">Uniformly distributed along each microtubule bundle of spindles in addition to centrioles during mitosis, expression promptly diminishes at interphase.</text>
</comment>
<comment type="domain">
    <text evidence="1">The KEN box is required for the association with the APC/C-Cdh1 complex, ubiquitination and degradation.</text>
</comment>
<comment type="PTM">
    <text evidence="1">Ubiquitinated by the anaphase promoting complex/cyclosome (APC/C).</text>
</comment>
<comment type="similarity">
    <text evidence="4">Belongs to the CKAP2 family.</text>
</comment>
<proteinExistence type="evidence at transcript level"/>
<organism>
    <name type="scientific">Bos taurus</name>
    <name type="common">Bovine</name>
    <dbReference type="NCBI Taxonomy" id="9913"/>
    <lineage>
        <taxon>Eukaryota</taxon>
        <taxon>Metazoa</taxon>
        <taxon>Chordata</taxon>
        <taxon>Craniata</taxon>
        <taxon>Vertebrata</taxon>
        <taxon>Euteleostomi</taxon>
        <taxon>Mammalia</taxon>
        <taxon>Eutheria</taxon>
        <taxon>Laurasiatheria</taxon>
        <taxon>Artiodactyla</taxon>
        <taxon>Ruminantia</taxon>
        <taxon>Pecora</taxon>
        <taxon>Bovidae</taxon>
        <taxon>Bovinae</taxon>
        <taxon>Bos</taxon>
    </lineage>
</organism>
<feature type="chain" id="PRO_0000324334" description="Cytoskeleton-associated protein 2-like">
    <location>
        <begin position="1"/>
        <end position="744"/>
    </location>
</feature>
<feature type="region of interest" description="Disordered" evidence="3">
    <location>
        <begin position="35"/>
        <end position="56"/>
    </location>
</feature>
<feature type="region of interest" description="Disordered" evidence="3">
    <location>
        <begin position="76"/>
        <end position="169"/>
    </location>
</feature>
<feature type="region of interest" description="Disordered" evidence="3">
    <location>
        <begin position="182"/>
        <end position="216"/>
    </location>
</feature>
<feature type="region of interest" description="Disordered" evidence="3">
    <location>
        <begin position="317"/>
        <end position="337"/>
    </location>
</feature>
<feature type="region of interest" description="Disordered" evidence="3">
    <location>
        <begin position="428"/>
        <end position="452"/>
    </location>
</feature>
<feature type="compositionally biased region" description="Polar residues" evidence="3">
    <location>
        <begin position="76"/>
        <end position="86"/>
    </location>
</feature>
<feature type="compositionally biased region" description="Polar residues" evidence="3">
    <location>
        <begin position="102"/>
        <end position="129"/>
    </location>
</feature>
<feature type="compositionally biased region" description="Polar residues" evidence="3">
    <location>
        <begin position="137"/>
        <end position="154"/>
    </location>
</feature>
<feature type="compositionally biased region" description="Polar residues" evidence="3">
    <location>
        <begin position="199"/>
        <end position="216"/>
    </location>
</feature>
<feature type="modified residue" description="Phosphoserine" evidence="2">
    <location>
        <position position="744"/>
    </location>
</feature>
<feature type="cross-link" description="Glycyl lysine isopeptide (Lys-Gly) (interchain with G-Cter in SUMO1); alternate" evidence="2">
    <location>
        <position position="195"/>
    </location>
</feature>
<feature type="cross-link" description="Glycyl lysine isopeptide (Lys-Gly) (interchain with G-Cter in SUMO2); alternate" evidence="2">
    <location>
        <position position="195"/>
    </location>
</feature>
<gene>
    <name type="primary">CKAP2L</name>
</gene>
<dbReference type="EMBL" id="BC142323">
    <property type="protein sequence ID" value="AAI42324.1"/>
    <property type="molecule type" value="mRNA"/>
</dbReference>
<dbReference type="EMBL" id="BT026235">
    <property type="protein sequence ID" value="ABG67074.1"/>
    <property type="molecule type" value="mRNA"/>
</dbReference>
<dbReference type="RefSeq" id="NP_001092371.1">
    <property type="nucleotide sequence ID" value="NM_001098901.2"/>
</dbReference>
<dbReference type="SMR" id="A5PK21"/>
<dbReference type="FunCoup" id="A5PK21">
    <property type="interactions" value="742"/>
</dbReference>
<dbReference type="STRING" id="9913.ENSBTAP00000002964"/>
<dbReference type="PaxDb" id="9913-ENSBTAP00000002964"/>
<dbReference type="GeneID" id="507498"/>
<dbReference type="KEGG" id="bta:507498"/>
<dbReference type="CTD" id="150468"/>
<dbReference type="VEuPathDB" id="HostDB:ENSBTAG00000002298"/>
<dbReference type="eggNOG" id="ENOG502RZUT">
    <property type="taxonomic scope" value="Eukaryota"/>
</dbReference>
<dbReference type="HOGENOM" id="CLU_022701_0_0_1"/>
<dbReference type="InParanoid" id="A5PK21"/>
<dbReference type="OMA" id="QKSTQPC"/>
<dbReference type="OrthoDB" id="6288182at2759"/>
<dbReference type="TreeFam" id="TF333003"/>
<dbReference type="Proteomes" id="UP000009136">
    <property type="component" value="Chromosome 11"/>
</dbReference>
<dbReference type="Bgee" id="ENSBTAG00000002298">
    <property type="expression patterns" value="Expressed in semen and 97 other cell types or tissues"/>
</dbReference>
<dbReference type="GO" id="GO:0005813">
    <property type="term" value="C:centrosome"/>
    <property type="evidence" value="ECO:0000318"/>
    <property type="project" value="GO_Central"/>
</dbReference>
<dbReference type="GO" id="GO:0005829">
    <property type="term" value="C:cytosol"/>
    <property type="evidence" value="ECO:0000318"/>
    <property type="project" value="GO_Central"/>
</dbReference>
<dbReference type="GO" id="GO:0072686">
    <property type="term" value="C:mitotic spindle"/>
    <property type="evidence" value="ECO:0000318"/>
    <property type="project" value="GO_Central"/>
</dbReference>
<dbReference type="GO" id="GO:0000922">
    <property type="term" value="C:spindle pole"/>
    <property type="evidence" value="ECO:0007669"/>
    <property type="project" value="UniProtKB-SubCell"/>
</dbReference>
<dbReference type="InterPro" id="IPR052855">
    <property type="entry name" value="CKAP2-like"/>
</dbReference>
<dbReference type="InterPro" id="IPR029197">
    <property type="entry name" value="CKAP2_C"/>
</dbReference>
<dbReference type="PANTHER" id="PTHR47078">
    <property type="entry name" value="CYTOSKELETON-ASSOCIATED PROTEIN 2-LIKE"/>
    <property type="match status" value="1"/>
</dbReference>
<dbReference type="PANTHER" id="PTHR47078:SF1">
    <property type="entry name" value="CYTOSKELETON-ASSOCIATED PROTEIN 2-LIKE"/>
    <property type="match status" value="1"/>
</dbReference>
<dbReference type="Pfam" id="PF15297">
    <property type="entry name" value="CKAP2_C"/>
    <property type="match status" value="2"/>
</dbReference>